<proteinExistence type="inferred from homology"/>
<comment type="function">
    <text evidence="1">Catalyzes the reversible conversion of ribose-5-phosphate to ribulose 5-phosphate.</text>
</comment>
<comment type="catalytic activity">
    <reaction evidence="1">
        <text>aldehydo-D-ribose 5-phosphate = D-ribulose 5-phosphate</text>
        <dbReference type="Rhea" id="RHEA:14657"/>
        <dbReference type="ChEBI" id="CHEBI:58121"/>
        <dbReference type="ChEBI" id="CHEBI:58273"/>
        <dbReference type="EC" id="5.3.1.6"/>
    </reaction>
</comment>
<comment type="pathway">
    <text evidence="1">Carbohydrate degradation; pentose phosphate pathway; D-ribose 5-phosphate from D-ribulose 5-phosphate (non-oxidative stage): step 1/1.</text>
</comment>
<comment type="subunit">
    <text evidence="1">Homodimer.</text>
</comment>
<comment type="similarity">
    <text evidence="1">Belongs to the ribose 5-phosphate isomerase family.</text>
</comment>
<organism>
    <name type="scientific">Prochlorococcus marinus (strain MIT 9211)</name>
    <dbReference type="NCBI Taxonomy" id="93059"/>
    <lineage>
        <taxon>Bacteria</taxon>
        <taxon>Bacillati</taxon>
        <taxon>Cyanobacteriota</taxon>
        <taxon>Cyanophyceae</taxon>
        <taxon>Synechococcales</taxon>
        <taxon>Prochlorococcaceae</taxon>
        <taxon>Prochlorococcus</taxon>
    </lineage>
</organism>
<sequence>MEDLQTQMKEAVAKAAIEQIHDGMVLGLGSGSTAALMIKALGAKISSGHLKDIVGVTTSFQGEVLATELGIPLQGLSAVSQIDLAIDGADEVDSNFQLIKGGGACHVQEKLVASLAERFVVVVDSSKIVKTLNLTFKLPVEVLPSAWQLVKNKIHEIGGVSQLRMAQKKAGPIVTDQGNLVLDVTFAGGINDPQTLEKQINNIPGVLENGLFVNLADEVLVGEIVSGTPGVKSLQKI</sequence>
<gene>
    <name evidence="1" type="primary">rpiA</name>
    <name type="ordered locus">P9211_16111</name>
</gene>
<name>RPIA_PROM4</name>
<feature type="chain" id="PRO_1000097682" description="Ribose-5-phosphate isomerase A">
    <location>
        <begin position="1"/>
        <end position="237"/>
    </location>
</feature>
<feature type="active site" description="Proton acceptor" evidence="1">
    <location>
        <position position="109"/>
    </location>
</feature>
<feature type="binding site" evidence="1">
    <location>
        <begin position="30"/>
        <end position="33"/>
    </location>
    <ligand>
        <name>substrate</name>
    </ligand>
</feature>
<feature type="binding site" evidence="1">
    <location>
        <begin position="87"/>
        <end position="90"/>
    </location>
    <ligand>
        <name>substrate</name>
    </ligand>
</feature>
<feature type="binding site" evidence="1">
    <location>
        <begin position="100"/>
        <end position="103"/>
    </location>
    <ligand>
        <name>substrate</name>
    </ligand>
</feature>
<feature type="binding site" evidence="1">
    <location>
        <position position="127"/>
    </location>
    <ligand>
        <name>substrate</name>
    </ligand>
</feature>
<accession>A9BCI0</accession>
<reference key="1">
    <citation type="journal article" date="2007" name="PLoS Genet.">
        <title>Patterns and implications of gene gain and loss in the evolution of Prochlorococcus.</title>
        <authorList>
            <person name="Kettler G.C."/>
            <person name="Martiny A.C."/>
            <person name="Huang K."/>
            <person name="Zucker J."/>
            <person name="Coleman M.L."/>
            <person name="Rodrigue S."/>
            <person name="Chen F."/>
            <person name="Lapidus A."/>
            <person name="Ferriera S."/>
            <person name="Johnson J."/>
            <person name="Steglich C."/>
            <person name="Church G.M."/>
            <person name="Richardson P."/>
            <person name="Chisholm S.W."/>
        </authorList>
    </citation>
    <scope>NUCLEOTIDE SEQUENCE [LARGE SCALE GENOMIC DNA]</scope>
    <source>
        <strain>MIT 9211</strain>
    </source>
</reference>
<evidence type="ECO:0000255" key="1">
    <source>
        <dbReference type="HAMAP-Rule" id="MF_00170"/>
    </source>
</evidence>
<keyword id="KW-0413">Isomerase</keyword>
<keyword id="KW-1185">Reference proteome</keyword>
<protein>
    <recommendedName>
        <fullName evidence="1">Ribose-5-phosphate isomerase A</fullName>
        <ecNumber evidence="1">5.3.1.6</ecNumber>
    </recommendedName>
    <alternativeName>
        <fullName evidence="1">Phosphoriboisomerase A</fullName>
        <shortName evidence="1">PRI</shortName>
    </alternativeName>
</protein>
<dbReference type="EC" id="5.3.1.6" evidence="1"/>
<dbReference type="EMBL" id="CP000878">
    <property type="protein sequence ID" value="ABX09542.1"/>
    <property type="molecule type" value="Genomic_DNA"/>
</dbReference>
<dbReference type="RefSeq" id="WP_012196163.1">
    <property type="nucleotide sequence ID" value="NC_009976.1"/>
</dbReference>
<dbReference type="SMR" id="A9BCI0"/>
<dbReference type="STRING" id="93059.P9211_16111"/>
<dbReference type="KEGG" id="pmj:P9211_16111"/>
<dbReference type="eggNOG" id="COG0120">
    <property type="taxonomic scope" value="Bacteria"/>
</dbReference>
<dbReference type="HOGENOM" id="CLU_056590_1_1_3"/>
<dbReference type="OrthoDB" id="5870696at2"/>
<dbReference type="UniPathway" id="UPA00115">
    <property type="reaction ID" value="UER00412"/>
</dbReference>
<dbReference type="Proteomes" id="UP000000788">
    <property type="component" value="Chromosome"/>
</dbReference>
<dbReference type="GO" id="GO:0005829">
    <property type="term" value="C:cytosol"/>
    <property type="evidence" value="ECO:0007669"/>
    <property type="project" value="TreeGrafter"/>
</dbReference>
<dbReference type="GO" id="GO:0004751">
    <property type="term" value="F:ribose-5-phosphate isomerase activity"/>
    <property type="evidence" value="ECO:0007669"/>
    <property type="project" value="UniProtKB-UniRule"/>
</dbReference>
<dbReference type="GO" id="GO:0006014">
    <property type="term" value="P:D-ribose metabolic process"/>
    <property type="evidence" value="ECO:0007669"/>
    <property type="project" value="TreeGrafter"/>
</dbReference>
<dbReference type="GO" id="GO:0009052">
    <property type="term" value="P:pentose-phosphate shunt, non-oxidative branch"/>
    <property type="evidence" value="ECO:0007669"/>
    <property type="project" value="UniProtKB-UniRule"/>
</dbReference>
<dbReference type="CDD" id="cd01398">
    <property type="entry name" value="RPI_A"/>
    <property type="match status" value="1"/>
</dbReference>
<dbReference type="FunFam" id="3.30.70.260:FF:000018">
    <property type="entry name" value="Ribose-5-phosphate isomerase A"/>
    <property type="match status" value="1"/>
</dbReference>
<dbReference type="FunFam" id="3.40.50.1360:FF:000001">
    <property type="entry name" value="Ribose-5-phosphate isomerase A"/>
    <property type="match status" value="1"/>
</dbReference>
<dbReference type="Gene3D" id="3.30.70.260">
    <property type="match status" value="1"/>
</dbReference>
<dbReference type="Gene3D" id="3.40.50.1360">
    <property type="match status" value="1"/>
</dbReference>
<dbReference type="HAMAP" id="MF_00170">
    <property type="entry name" value="Rib_5P_isom_A"/>
    <property type="match status" value="1"/>
</dbReference>
<dbReference type="InterPro" id="IPR037171">
    <property type="entry name" value="NagB/RpiA_transferase-like"/>
</dbReference>
<dbReference type="InterPro" id="IPR020672">
    <property type="entry name" value="Ribose5P_isomerase_typA_subgr"/>
</dbReference>
<dbReference type="InterPro" id="IPR004788">
    <property type="entry name" value="Ribose5P_isomerase_type_A"/>
</dbReference>
<dbReference type="NCBIfam" id="NF001924">
    <property type="entry name" value="PRK00702.1"/>
    <property type="match status" value="1"/>
</dbReference>
<dbReference type="NCBIfam" id="TIGR00021">
    <property type="entry name" value="rpiA"/>
    <property type="match status" value="1"/>
</dbReference>
<dbReference type="PANTHER" id="PTHR11934">
    <property type="entry name" value="RIBOSE-5-PHOSPHATE ISOMERASE"/>
    <property type="match status" value="1"/>
</dbReference>
<dbReference type="PANTHER" id="PTHR11934:SF0">
    <property type="entry name" value="RIBOSE-5-PHOSPHATE ISOMERASE"/>
    <property type="match status" value="1"/>
</dbReference>
<dbReference type="Pfam" id="PF06026">
    <property type="entry name" value="Rib_5-P_isom_A"/>
    <property type="match status" value="1"/>
</dbReference>
<dbReference type="SMART" id="SM01134">
    <property type="entry name" value="DeoRC"/>
    <property type="match status" value="1"/>
</dbReference>
<dbReference type="SUPFAM" id="SSF75445">
    <property type="entry name" value="D-ribose-5-phosphate isomerase (RpiA), lid domain"/>
    <property type="match status" value="1"/>
</dbReference>
<dbReference type="SUPFAM" id="SSF100950">
    <property type="entry name" value="NagB/RpiA/CoA transferase-like"/>
    <property type="match status" value="1"/>
</dbReference>